<feature type="initiator methionine" description="Removed; by host">
    <location>
        <position position="1"/>
    </location>
</feature>
<feature type="chain" id="PRO_0000164639" description="Packaging enzyme P4">
    <location>
        <begin position="2"/>
        <end position="332"/>
    </location>
</feature>
<feature type="region of interest" description="Involved in the regulation and mechanisms of transcription, replication and genome packaging" evidence="1">
    <location>
        <begin position="111"/>
        <end position="138"/>
    </location>
</feature>
<feature type="region of interest" description="Disordered" evidence="2">
    <location>
        <begin position="310"/>
        <end position="332"/>
    </location>
</feature>
<feature type="compositionally biased region" description="Basic and acidic residues" evidence="2">
    <location>
        <begin position="313"/>
        <end position="322"/>
    </location>
</feature>
<feature type="binding site" evidence="1">
    <location>
        <begin position="126"/>
        <end position="133"/>
    </location>
    <ligand>
        <name>ATP</name>
        <dbReference type="ChEBI" id="CHEBI:30616"/>
    </ligand>
</feature>
<feature type="helix" evidence="6">
    <location>
        <begin position="7"/>
        <end position="22"/>
    </location>
</feature>
<feature type="strand" evidence="6">
    <location>
        <begin position="29"/>
        <end position="31"/>
    </location>
</feature>
<feature type="strand" evidence="6">
    <location>
        <begin position="34"/>
        <end position="36"/>
    </location>
</feature>
<feature type="helix" evidence="6">
    <location>
        <begin position="38"/>
        <end position="54"/>
    </location>
</feature>
<feature type="strand" evidence="6">
    <location>
        <begin position="57"/>
        <end position="59"/>
    </location>
</feature>
<feature type="turn" evidence="6">
    <location>
        <begin position="61"/>
        <end position="64"/>
    </location>
</feature>
<feature type="helix" evidence="6">
    <location>
        <begin position="66"/>
        <end position="69"/>
    </location>
</feature>
<feature type="strand" evidence="6">
    <location>
        <begin position="88"/>
        <end position="90"/>
    </location>
</feature>
<feature type="helix" evidence="6">
    <location>
        <begin position="92"/>
        <end position="95"/>
    </location>
</feature>
<feature type="strand" evidence="6">
    <location>
        <begin position="109"/>
        <end position="114"/>
    </location>
</feature>
<feature type="strand" evidence="6">
    <location>
        <begin position="117"/>
        <end position="127"/>
    </location>
</feature>
<feature type="helix" evidence="6">
    <location>
        <begin position="132"/>
        <end position="138"/>
    </location>
</feature>
<feature type="strand" evidence="6">
    <location>
        <begin position="143"/>
        <end position="147"/>
    </location>
</feature>
<feature type="helix" evidence="6">
    <location>
        <begin position="154"/>
        <end position="157"/>
    </location>
</feature>
<feature type="strand" evidence="6">
    <location>
        <begin position="161"/>
        <end position="163"/>
    </location>
</feature>
<feature type="helix" evidence="6">
    <location>
        <begin position="167"/>
        <end position="179"/>
    </location>
</feature>
<feature type="strand" evidence="6">
    <location>
        <begin position="184"/>
        <end position="187"/>
    </location>
</feature>
<feature type="helix" evidence="6">
    <location>
        <begin position="190"/>
        <end position="193"/>
    </location>
</feature>
<feature type="helix" evidence="6">
    <location>
        <begin position="208"/>
        <end position="222"/>
    </location>
</feature>
<feature type="strand" evidence="6">
    <location>
        <begin position="226"/>
        <end position="230"/>
    </location>
</feature>
<feature type="turn" evidence="6">
    <location>
        <begin position="237"/>
        <end position="239"/>
    </location>
</feature>
<feature type="helix" evidence="6">
    <location>
        <begin position="240"/>
        <end position="248"/>
    </location>
</feature>
<feature type="strand" evidence="6">
    <location>
        <begin position="252"/>
        <end position="258"/>
    </location>
</feature>
<feature type="strand" evidence="6">
    <location>
        <begin position="261"/>
        <end position="269"/>
    </location>
</feature>
<feature type="strand" evidence="6">
    <location>
        <begin position="272"/>
        <end position="275"/>
    </location>
</feature>
<feature type="helix" evidence="7">
    <location>
        <begin position="297"/>
        <end position="300"/>
    </location>
</feature>
<gene>
    <name type="primary">P4</name>
</gene>
<organismHost>
    <name type="scientific">Pseudomonas savastanoi pv. phaseolicola</name>
    <name type="common">Pseudomonas syringae pv. phaseolicola</name>
    <dbReference type="NCBI Taxonomy" id="319"/>
</organismHost>
<sequence>MPIVVTQAHIDRVGIAADLLDASPVSLQVLGRPTAINTVVIKTYIAAVMELASKQGGSLAGVDIRPSVLLKDTAIFTKPKAKSADVESDVDVLDTGIYSVPGLARKPVTHRWPSEGIYSGVTALMGATGSGKSITLNEKLRPDVLIRWGEVAEAYDELDTAVHISTLDEMLIVCIGLGALGFNVAVDSVRPLLFRLKGAASAGGIVAVFYSLLTDISNLFTQYDCSVVMVVNPMVDAEKIEYVFGQVMASTVGAILCADGNVSRTMFRTNKGRIFNGAAPLAADTHMPSMDRPTSMKALDHTSIASVAPLERGSVDTDDRNSAPRRGANFSL</sequence>
<dbReference type="EC" id="3.6.1.15"/>
<dbReference type="EMBL" id="M17461">
    <property type="protein sequence ID" value="AAA32356.1"/>
    <property type="molecule type" value="Genomic_RNA"/>
</dbReference>
<dbReference type="PIR" id="C29885">
    <property type="entry name" value="P4BPF6"/>
</dbReference>
<dbReference type="RefSeq" id="NP_620347.1">
    <property type="nucleotide sequence ID" value="NC_003715.1"/>
</dbReference>
<dbReference type="PDB" id="4BLO">
    <property type="method" value="X-ray"/>
    <property type="resolution" value="2.80 A"/>
    <property type="chains" value="A/B/C/D/E/F/G/H/I/J/K/L=1-309"/>
</dbReference>
<dbReference type="PDB" id="5MUU">
    <property type="method" value="EM"/>
    <property type="resolution" value="4.00 A"/>
    <property type="chains" value="C=1-332"/>
</dbReference>
<dbReference type="PDB" id="5MUV">
    <property type="method" value="EM"/>
    <property type="resolution" value="9.10 A"/>
    <property type="chains" value="A/B/I/J/K/L=1-309"/>
</dbReference>
<dbReference type="PDB" id="5MUW">
    <property type="method" value="EM"/>
    <property type="resolution" value="2.80 A"/>
    <property type="chains" value="A/B/I/J/K/L=1-309"/>
</dbReference>
<dbReference type="PDB" id="6HY0">
    <property type="method" value="EM"/>
    <property type="resolution" value="3.50 A"/>
    <property type="chains" value="C=1-332"/>
</dbReference>
<dbReference type="PDBsum" id="4BLO"/>
<dbReference type="PDBsum" id="5MUU"/>
<dbReference type="PDBsum" id="5MUV"/>
<dbReference type="PDBsum" id="5MUW"/>
<dbReference type="PDBsum" id="6HY0"/>
<dbReference type="EMDB" id="EMD-0299"/>
<dbReference type="EMDB" id="EMD-3185"/>
<dbReference type="EMDB" id="EMD-3186"/>
<dbReference type="EMDB" id="EMD-3187"/>
<dbReference type="EMDB" id="EMD-3571"/>
<dbReference type="EMDB" id="EMD-3572"/>
<dbReference type="EMDB" id="EMD-3573"/>
<dbReference type="SMR" id="P11125"/>
<dbReference type="KEGG" id="vg:956437"/>
<dbReference type="SABIO-RK" id="P11125"/>
<dbReference type="Proteomes" id="UP000002610">
    <property type="component" value="Genome"/>
</dbReference>
<dbReference type="GO" id="GO:0019028">
    <property type="term" value="C:viral capsid"/>
    <property type="evidence" value="ECO:0007669"/>
    <property type="project" value="UniProtKB-KW"/>
</dbReference>
<dbReference type="GO" id="GO:0046729">
    <property type="term" value="C:viral procapsid"/>
    <property type="evidence" value="ECO:0000314"/>
    <property type="project" value="CACAO"/>
</dbReference>
<dbReference type="GO" id="GO:0005524">
    <property type="term" value="F:ATP binding"/>
    <property type="evidence" value="ECO:0007669"/>
    <property type="project" value="UniProtKB-KW"/>
</dbReference>
<dbReference type="GO" id="GO:0017111">
    <property type="term" value="F:ribonucleoside triphosphate phosphatase activity"/>
    <property type="evidence" value="ECO:0000314"/>
    <property type="project" value="CACAO"/>
</dbReference>
<dbReference type="GO" id="GO:0019072">
    <property type="term" value="P:viral genome packaging"/>
    <property type="evidence" value="ECO:0007669"/>
    <property type="project" value="InterPro"/>
</dbReference>
<dbReference type="FunFam" id="3.40.50.300:FF:004336">
    <property type="entry name" value="Packaging enzyme P4"/>
    <property type="match status" value="1"/>
</dbReference>
<dbReference type="Gene3D" id="3.40.50.300">
    <property type="entry name" value="P-loop containing nucleotide triphosphate hydrolases"/>
    <property type="match status" value="1"/>
</dbReference>
<dbReference type="InterPro" id="IPR027417">
    <property type="entry name" value="P-loop_NTPase"/>
</dbReference>
<dbReference type="InterPro" id="IPR020973">
    <property type="entry name" value="Packaging_enz_P4"/>
</dbReference>
<dbReference type="Pfam" id="PF11602">
    <property type="entry name" value="NTPase_P4"/>
    <property type="match status" value="1"/>
</dbReference>
<dbReference type="SUPFAM" id="SSF52540">
    <property type="entry name" value="P-loop containing nucleoside triphosphate hydrolases"/>
    <property type="match status" value="1"/>
</dbReference>
<comment type="function">
    <text evidence="3">Packaging motor with helicase and translocase activities. Part of the packaging complex that packages the viral RNA segments, replicate them into a double-stranded form and transcribe them. is one of the structural proteins of the polyhedral procapsid, which is responsible for genomic replication and transcription. Displays single-stranded RNA-stimulated NTPase activity.</text>
</comment>
<comment type="catalytic activity">
    <reaction>
        <text>a ribonucleoside 5'-triphosphate + H2O = a ribonucleoside 5'-diphosphate + phosphate + H(+)</text>
        <dbReference type="Rhea" id="RHEA:23680"/>
        <dbReference type="ChEBI" id="CHEBI:15377"/>
        <dbReference type="ChEBI" id="CHEBI:15378"/>
        <dbReference type="ChEBI" id="CHEBI:43474"/>
        <dbReference type="ChEBI" id="CHEBI:57930"/>
        <dbReference type="ChEBI" id="CHEBI:61557"/>
        <dbReference type="EC" id="3.6.1.15"/>
    </reaction>
</comment>
<comment type="subunit">
    <text evidence="4 5">Homohexamer. Part of the packaging complex composed of RDRP, P4 and P7.</text>
</comment>
<comment type="subcellular location">
    <subcellularLocation>
        <location>Virion</location>
    </subcellularLocation>
    <text>Capsid protein found in 72 copies. Prior to RNA packaging, localizes on the outer procapsid surface at the 12 potential RNA portal sites.</text>
</comment>
<accession>P11125</accession>
<protein>
    <recommendedName>
        <fullName>Packaging enzyme P4</fullName>
        <ecNumber>3.6.1.15</ecNumber>
    </recommendedName>
</protein>
<evidence type="ECO:0000250" key="1"/>
<evidence type="ECO:0000256" key="2">
    <source>
        <dbReference type="SAM" id="MobiDB-lite"/>
    </source>
</evidence>
<evidence type="ECO:0000269" key="3">
    <source>
    </source>
</evidence>
<evidence type="ECO:0000269" key="4">
    <source>
    </source>
</evidence>
<evidence type="ECO:0000269" key="5">
    <source>
    </source>
</evidence>
<evidence type="ECO:0007829" key="6">
    <source>
        <dbReference type="PDB" id="4BLO"/>
    </source>
</evidence>
<evidence type="ECO:0007829" key="7">
    <source>
        <dbReference type="PDB" id="6HY0"/>
    </source>
</evidence>
<keyword id="KW-0002">3D-structure</keyword>
<keyword id="KW-0067">ATP-binding</keyword>
<keyword id="KW-0167">Capsid protein</keyword>
<keyword id="KW-0903">Direct protein sequencing</keyword>
<keyword id="KW-0378">Hydrolase</keyword>
<keyword id="KW-0547">Nucleotide-binding</keyword>
<keyword id="KW-1185">Reference proteome</keyword>
<keyword id="KW-0804">Transcription</keyword>
<keyword id="KW-0231">Viral genome packaging</keyword>
<keyword id="KW-1188">Viral release from host cell</keyword>
<keyword id="KW-0946">Virion</keyword>
<name>P4_BPPH6</name>
<reference key="1">
    <citation type="journal article" date="1988" name="J. Virol.">
        <title>Nucleotide sequence of the large double-stranded RNA segment of bacteriophage phi 6: genes specifying the viral replicase and transcriptase.</title>
        <authorList>
            <person name="Mindich L."/>
            <person name="Nemhauser I."/>
            <person name="Gottlieb P."/>
            <person name="Romantschuk M."/>
            <person name="Carton J."/>
            <person name="Frucht S."/>
            <person name="Strassman J."/>
            <person name="Bamford D.H."/>
            <person name="Kalkkinen N."/>
        </authorList>
    </citation>
    <scope>NUCLEOTIDE SEQUENCE [GENOMIC RNA]</scope>
    <scope>PARTIAL PROTEIN SEQUENCE</scope>
</reference>
<reference key="2">
    <citation type="journal article" date="2002" name="J. Virol.">
        <title>Nonspecific nucleoside triphosphatase P4 of double-stranded RNA bacteriophage phi6 is required for single-stranded RNA packaging and transcription.</title>
        <authorList>
            <person name="Pirttimaa M.J."/>
            <person name="Paatero A.O."/>
            <person name="Frilander M.J."/>
            <person name="Bamford D.H."/>
        </authorList>
    </citation>
    <scope>FUNCTION</scope>
    <scope>NTPASE ACTIVITY</scope>
</reference>
<reference key="3">
    <citation type="journal article" date="2003" name="J. Biol. Chem.">
        <title>RNA packaging device of double-stranded RNA bacteriophages, possibly as simple as hexamer of P4 protein.</title>
        <authorList>
            <person name="Kainov D.E."/>
            <person name="Pirttimaa M.J."/>
            <person name="Tuma R."/>
            <person name="Butcher S.J."/>
            <person name="Thomas G.J. Jr."/>
            <person name="Bamford D.H."/>
            <person name="Makeyev E.V."/>
        </authorList>
    </citation>
    <scope>SUBUNIT</scope>
</reference>
<reference key="4">
    <citation type="journal article" date="2012" name="PLoS ONE">
        <title>Protein P7 of the cystovirus phi6 is located at the three-fold axis of the unexpanded procapsid.</title>
        <authorList>
            <person name="Katz G."/>
            <person name="Wei H."/>
            <person name="Alimova A."/>
            <person name="Katz A."/>
            <person name="Morgan D.G."/>
            <person name="Gottlieb P."/>
        </authorList>
    </citation>
    <scope>IDENTIFICATION IN THE PACKAGING COMPLEX</scope>
</reference>
<reference key="5">
    <citation type="journal article" date="2012" name="Adv. Exp. Med. Biol.">
        <title>Mechanism of RNA packaging motor.</title>
        <authorList>
            <person name="Mancini E.J."/>
            <person name="Tuma R."/>
        </authorList>
    </citation>
    <scope>REVIEW</scope>
</reference>
<reference key="6">
    <citation type="journal article" date="2007" name="Structure">
        <title>Electron cryomicroscopy comparison of the architectures of the enveloped bacteriophages phi6 and phi8.</title>
        <authorList>
            <person name="Jaalinoja H.T."/>
            <person name="Huiskonen J.T."/>
            <person name="Butcher S.J."/>
        </authorList>
    </citation>
    <scope>STRUCTURE BY ELECTRON MICROSCOPY (14.0 ANGSTROMS)</scope>
</reference>
<proteinExistence type="evidence at protein level"/>
<organism>
    <name type="scientific">Pseudomonas phage phi6</name>
    <name type="common">Bacteriophage phi-6</name>
    <dbReference type="NCBI Taxonomy" id="2928686"/>
    <lineage>
        <taxon>Viruses</taxon>
        <taxon>Riboviria</taxon>
        <taxon>Orthornavirae</taxon>
        <taxon>Duplornaviricota</taxon>
        <taxon>Vidaverviricetes</taxon>
        <taxon>Mindivirales</taxon>
        <taxon>Cystoviridae</taxon>
        <taxon>Cystovirus</taxon>
        <taxon>Cystovirus phi6</taxon>
    </lineage>
</organism>